<gene>
    <name type="ordered locus">BQ2027_MB2584C</name>
</gene>
<accession>P67488</accession>
<accession>A0A1R3Y1K0</accession>
<accession>P94999</accession>
<accession>X2BLB4</accession>
<evidence type="ECO:0000255" key="1">
    <source>
        <dbReference type="HAMAP-Rule" id="MF_00651"/>
    </source>
</evidence>
<evidence type="ECO:0000256" key="2">
    <source>
        <dbReference type="SAM" id="MobiDB-lite"/>
    </source>
</evidence>
<keyword id="KW-0963">Cytoplasm</keyword>
<keyword id="KW-0378">Hydrolase</keyword>
<keyword id="KW-0540">Nuclease</keyword>
<keyword id="KW-1185">Reference proteome</keyword>
<keyword id="KW-0690">Ribosome biogenesis</keyword>
<feature type="chain" id="PRO_0000172101" description="Putative pre-16S rRNA nuclease">
    <location>
        <begin position="1"/>
        <end position="170"/>
    </location>
</feature>
<feature type="region of interest" description="Disordered" evidence="2">
    <location>
        <begin position="1"/>
        <end position="25"/>
    </location>
</feature>
<feature type="compositionally biased region" description="Basic and acidic residues" evidence="2">
    <location>
        <begin position="7"/>
        <end position="21"/>
    </location>
</feature>
<reference key="1">
    <citation type="journal article" date="2003" name="Proc. Natl. Acad. Sci. U.S.A.">
        <title>The complete genome sequence of Mycobacterium bovis.</title>
        <authorList>
            <person name="Garnier T."/>
            <person name="Eiglmeier K."/>
            <person name="Camus J.-C."/>
            <person name="Medina N."/>
            <person name="Mansoor H."/>
            <person name="Pryor M."/>
            <person name="Duthoy S."/>
            <person name="Grondin S."/>
            <person name="Lacroix C."/>
            <person name="Monsempe C."/>
            <person name="Simon S."/>
            <person name="Harris B."/>
            <person name="Atkin R."/>
            <person name="Doggett J."/>
            <person name="Mayes R."/>
            <person name="Keating L."/>
            <person name="Wheeler P.R."/>
            <person name="Parkhill J."/>
            <person name="Barrell B.G."/>
            <person name="Cole S.T."/>
            <person name="Gordon S.V."/>
            <person name="Hewinson R.G."/>
        </authorList>
    </citation>
    <scope>NUCLEOTIDE SEQUENCE [LARGE SCALE GENOMIC DNA]</scope>
    <source>
        <strain>ATCC BAA-935 / AF2122/97</strain>
    </source>
</reference>
<reference key="2">
    <citation type="journal article" date="2017" name="Genome Announc.">
        <title>Updated reference genome sequence and annotation of Mycobacterium bovis AF2122/97.</title>
        <authorList>
            <person name="Malone K.M."/>
            <person name="Farrell D."/>
            <person name="Stuber T.P."/>
            <person name="Schubert O.T."/>
            <person name="Aebersold R."/>
            <person name="Robbe-Austerman S."/>
            <person name="Gordon S.V."/>
        </authorList>
    </citation>
    <scope>NUCLEOTIDE SEQUENCE [LARGE SCALE GENOMIC DNA]</scope>
    <scope>GENOME REANNOTATION</scope>
    <source>
        <strain>ATCC BAA-935 / AF2122/97</strain>
    </source>
</reference>
<name>YQGF_MYCBO</name>
<comment type="function">
    <text evidence="1">Could be a nuclease involved in processing of the 5'-end of pre-16S rRNA.</text>
</comment>
<comment type="subcellular location">
    <subcellularLocation>
        <location evidence="1">Cytoplasm</location>
    </subcellularLocation>
</comment>
<comment type="similarity">
    <text evidence="1">Belongs to the YqgF nuclease family.</text>
</comment>
<dbReference type="EC" id="3.1.-.-" evidence="1"/>
<dbReference type="EMBL" id="LT708304">
    <property type="protein sequence ID" value="SIU01202.1"/>
    <property type="molecule type" value="Genomic_DNA"/>
</dbReference>
<dbReference type="RefSeq" id="NP_856230.1">
    <property type="nucleotide sequence ID" value="NC_002945.3"/>
</dbReference>
<dbReference type="SMR" id="P67488"/>
<dbReference type="KEGG" id="mbo:BQ2027_MB2584C"/>
<dbReference type="PATRIC" id="fig|233413.5.peg.2842"/>
<dbReference type="Proteomes" id="UP000001419">
    <property type="component" value="Chromosome"/>
</dbReference>
<dbReference type="GO" id="GO:0005829">
    <property type="term" value="C:cytosol"/>
    <property type="evidence" value="ECO:0007669"/>
    <property type="project" value="TreeGrafter"/>
</dbReference>
<dbReference type="GO" id="GO:0004518">
    <property type="term" value="F:nuclease activity"/>
    <property type="evidence" value="ECO:0007669"/>
    <property type="project" value="UniProtKB-KW"/>
</dbReference>
<dbReference type="GO" id="GO:0000967">
    <property type="term" value="P:rRNA 5'-end processing"/>
    <property type="evidence" value="ECO:0007669"/>
    <property type="project" value="UniProtKB-UniRule"/>
</dbReference>
<dbReference type="CDD" id="cd16964">
    <property type="entry name" value="YqgF"/>
    <property type="match status" value="1"/>
</dbReference>
<dbReference type="FunFam" id="3.30.420.140:FF:000005">
    <property type="entry name" value="Putative pre-16S rRNA nuclease"/>
    <property type="match status" value="1"/>
</dbReference>
<dbReference type="Gene3D" id="3.30.420.140">
    <property type="entry name" value="YqgF/RNase H-like domain"/>
    <property type="match status" value="1"/>
</dbReference>
<dbReference type="HAMAP" id="MF_00651">
    <property type="entry name" value="Nuclease_YqgF"/>
    <property type="match status" value="1"/>
</dbReference>
<dbReference type="InterPro" id="IPR012337">
    <property type="entry name" value="RNaseH-like_sf"/>
</dbReference>
<dbReference type="InterPro" id="IPR005227">
    <property type="entry name" value="YqgF"/>
</dbReference>
<dbReference type="InterPro" id="IPR006641">
    <property type="entry name" value="YqgF/RNaseH-like_dom"/>
</dbReference>
<dbReference type="InterPro" id="IPR037027">
    <property type="entry name" value="YqgF/RNaseH-like_dom_sf"/>
</dbReference>
<dbReference type="NCBIfam" id="TIGR00250">
    <property type="entry name" value="RNAse_H_YqgF"/>
    <property type="match status" value="1"/>
</dbReference>
<dbReference type="PANTHER" id="PTHR33317">
    <property type="entry name" value="POLYNUCLEOTIDYL TRANSFERASE, RIBONUCLEASE H-LIKE SUPERFAMILY PROTEIN"/>
    <property type="match status" value="1"/>
</dbReference>
<dbReference type="PANTHER" id="PTHR33317:SF4">
    <property type="entry name" value="POLYNUCLEOTIDYL TRANSFERASE, RIBONUCLEASE H-LIKE SUPERFAMILY PROTEIN"/>
    <property type="match status" value="1"/>
</dbReference>
<dbReference type="Pfam" id="PF03652">
    <property type="entry name" value="RuvX"/>
    <property type="match status" value="1"/>
</dbReference>
<dbReference type="SMART" id="SM00732">
    <property type="entry name" value="YqgFc"/>
    <property type="match status" value="1"/>
</dbReference>
<dbReference type="SUPFAM" id="SSF53098">
    <property type="entry name" value="Ribonuclease H-like"/>
    <property type="match status" value="1"/>
</dbReference>
<proteinExistence type="inferred from homology"/>
<organism>
    <name type="scientific">Mycobacterium bovis (strain ATCC BAA-935 / AF2122/97)</name>
    <dbReference type="NCBI Taxonomy" id="233413"/>
    <lineage>
        <taxon>Bacteria</taxon>
        <taxon>Bacillati</taxon>
        <taxon>Actinomycetota</taxon>
        <taxon>Actinomycetes</taxon>
        <taxon>Mycobacteriales</taxon>
        <taxon>Mycobacteriaceae</taxon>
        <taxon>Mycobacterium</taxon>
        <taxon>Mycobacterium tuberculosis complex</taxon>
    </lineage>
</organism>
<protein>
    <recommendedName>
        <fullName evidence="1">Putative pre-16S rRNA nuclease</fullName>
        <ecNumber evidence="1">3.1.-.-</ecNumber>
    </recommendedName>
</protein>
<sequence>MVPAQHRPPDRPGDPAHDPGRGRRLGIDVGAARIGVACSDPDAILATPVETVRRDRSGKHLRRLAALAAELEAVEVIVGLPRTLADRIGRSAQDAIELAEALARRVSPTPVRLADERLTTVSAQRSLRQAGVRASEQRAVIDQAAAVAILQSWLDERLAAMAGTQEGSDA</sequence>